<accession>Q2T9U5</accession>
<dbReference type="EC" id="3.1.-.-"/>
<dbReference type="EMBL" id="BC111262">
    <property type="protein sequence ID" value="AAI11263.1"/>
    <property type="molecule type" value="mRNA"/>
</dbReference>
<dbReference type="RefSeq" id="NP_001033243.1">
    <property type="nucleotide sequence ID" value="NM_001038154.2"/>
</dbReference>
<dbReference type="RefSeq" id="XP_005224807.1">
    <property type="nucleotide sequence ID" value="XM_005224750.5"/>
</dbReference>
<dbReference type="RefSeq" id="XP_005224808.1">
    <property type="nucleotide sequence ID" value="XM_005224751.5"/>
</dbReference>
<dbReference type="RefSeq" id="XP_059737356.1">
    <property type="nucleotide sequence ID" value="XM_059881373.1"/>
</dbReference>
<dbReference type="SMR" id="Q2T9U5"/>
<dbReference type="FunCoup" id="Q2T9U5">
    <property type="interactions" value="1704"/>
</dbReference>
<dbReference type="STRING" id="9913.ENSBTAP00000008458"/>
<dbReference type="PaxDb" id="9913-ENSBTAP00000008458"/>
<dbReference type="GeneID" id="532864"/>
<dbReference type="KEGG" id="bta:532864"/>
<dbReference type="CTD" id="81691"/>
<dbReference type="VEuPathDB" id="HostDB:ENSBTAG00000006449"/>
<dbReference type="eggNOG" id="KOG2248">
    <property type="taxonomic scope" value="Eukaryota"/>
</dbReference>
<dbReference type="HOGENOM" id="CLU_024781_0_0_1"/>
<dbReference type="InParanoid" id="Q2T9U5"/>
<dbReference type="OMA" id="PHICIQY"/>
<dbReference type="OrthoDB" id="3996471at2759"/>
<dbReference type="TreeFam" id="TF314974"/>
<dbReference type="Proteomes" id="UP000009136">
    <property type="component" value="Chromosome 25"/>
</dbReference>
<dbReference type="Bgee" id="ENSBTAG00000006449">
    <property type="expression patterns" value="Expressed in spermatocyte and 104 other cell types or tissues"/>
</dbReference>
<dbReference type="GO" id="GO:0005634">
    <property type="term" value="C:nucleus"/>
    <property type="evidence" value="ECO:0000318"/>
    <property type="project" value="GO_Central"/>
</dbReference>
<dbReference type="GO" id="GO:0004527">
    <property type="term" value="F:exonuclease activity"/>
    <property type="evidence" value="ECO:0000318"/>
    <property type="project" value="GO_Central"/>
</dbReference>
<dbReference type="GO" id="GO:0003723">
    <property type="term" value="F:RNA binding"/>
    <property type="evidence" value="ECO:0007669"/>
    <property type="project" value="UniProtKB-KW"/>
</dbReference>
<dbReference type="GO" id="GO:0031125">
    <property type="term" value="P:rRNA 3'-end processing"/>
    <property type="evidence" value="ECO:0000318"/>
    <property type="project" value="GO_Central"/>
</dbReference>
<dbReference type="CDD" id="cd06145">
    <property type="entry name" value="REX1_like"/>
    <property type="match status" value="1"/>
</dbReference>
<dbReference type="FunFam" id="3.30.70.330:FF:000528">
    <property type="entry name" value="RNA exonuclease 5"/>
    <property type="match status" value="1"/>
</dbReference>
<dbReference type="FunFam" id="3.30.420.10:FF:000055">
    <property type="entry name" value="RNA exonuclease 5 isoform X1"/>
    <property type="match status" value="1"/>
</dbReference>
<dbReference type="FunFam" id="3.30.70.330:FF:000358">
    <property type="entry name" value="RNA exonuclease 5 isoform X1"/>
    <property type="match status" value="1"/>
</dbReference>
<dbReference type="Gene3D" id="3.30.70.330">
    <property type="match status" value="2"/>
</dbReference>
<dbReference type="Gene3D" id="3.30.420.10">
    <property type="entry name" value="Ribonuclease H-like superfamily/Ribonuclease H"/>
    <property type="match status" value="1"/>
</dbReference>
<dbReference type="InterPro" id="IPR013520">
    <property type="entry name" value="Exonuclease_RNaseT/DNA_pol3"/>
</dbReference>
<dbReference type="InterPro" id="IPR012677">
    <property type="entry name" value="Nucleotide-bd_a/b_plait_sf"/>
</dbReference>
<dbReference type="InterPro" id="IPR035979">
    <property type="entry name" value="RBD_domain_sf"/>
</dbReference>
<dbReference type="InterPro" id="IPR034922">
    <property type="entry name" value="REX1-like_exo"/>
</dbReference>
<dbReference type="InterPro" id="IPR047021">
    <property type="entry name" value="REXO1/3/4-like"/>
</dbReference>
<dbReference type="InterPro" id="IPR012337">
    <property type="entry name" value="RNaseH-like_sf"/>
</dbReference>
<dbReference type="InterPro" id="IPR036397">
    <property type="entry name" value="RNaseH_sf"/>
</dbReference>
<dbReference type="InterPro" id="IPR000504">
    <property type="entry name" value="RRM_dom"/>
</dbReference>
<dbReference type="PANTHER" id="PTHR12801:SF82">
    <property type="entry name" value="RNA EXONUCLEASE 5"/>
    <property type="match status" value="1"/>
</dbReference>
<dbReference type="PANTHER" id="PTHR12801">
    <property type="entry name" value="RNA EXONUCLEASE REXO1 / RECO3 FAMILY MEMBER-RELATED"/>
    <property type="match status" value="1"/>
</dbReference>
<dbReference type="Pfam" id="PF00929">
    <property type="entry name" value="RNase_T"/>
    <property type="match status" value="1"/>
</dbReference>
<dbReference type="Pfam" id="PF00076">
    <property type="entry name" value="RRM_1"/>
    <property type="match status" value="2"/>
</dbReference>
<dbReference type="SMART" id="SM00479">
    <property type="entry name" value="EXOIII"/>
    <property type="match status" value="1"/>
</dbReference>
<dbReference type="SMART" id="SM00360">
    <property type="entry name" value="RRM"/>
    <property type="match status" value="2"/>
</dbReference>
<dbReference type="SUPFAM" id="SSF53098">
    <property type="entry name" value="Ribonuclease H-like"/>
    <property type="match status" value="1"/>
</dbReference>
<dbReference type="SUPFAM" id="SSF54928">
    <property type="entry name" value="RNA-binding domain, RBD"/>
    <property type="match status" value="1"/>
</dbReference>
<dbReference type="PROSITE" id="PS50102">
    <property type="entry name" value="RRM"/>
    <property type="match status" value="2"/>
</dbReference>
<name>REXO5_BOVIN</name>
<gene>
    <name type="primary">REXO5</name>
</gene>
<sequence>MEPERKRSGSTLKKGRKRRLIPSKVVGAAEATRSHWDLEEKQQPIAKKARLSTVLFAENCEVTHGQLCELLKYAVLGKSSFPKPSWCQLFHQNHLKNVVVFILQGLSQLHFYKFYLEFGFLRKAFKHKFRMPPPSSDFLADIIGLQKKQIIGNLPKAMEGSLPFASSKVSINLQKDPIIQKYGFKKVGLTRCLLTKEEMKTYHFPLQGFLDCENFVPTKCNGSVTDNSPLFGLDCEMCLTSKGRELTRISLVAEGGGCVMDELVKPDNKIVDYLTSFSGITKKILNPVTTKLKDVQRRLKILLPPDAVLVGHSLDLDLRALKMIHPYVIDTSLLYVREQGRRFKLKFLAKAILGKDIQCPDRLGHDATEDARTTLELARYFLKYGPKKIAELNLEALFSYQESQEPRNTAEGVQRLNTSVLECLDSVGQKLLFLTQEADASALSSSKNCQTIKCLSNKEVLEQARVEIPLFPFSIVQFSFEPFSPNLTQEMNKRIKIKWTEMSTVYAGPFNKNCNLSALKRLFKSFGPVQLMTLVLETHQPHLCIQYEVLEAAQLAIESLDGVLVEGSCIKVQRPVTELTLDCDTLVNELEQDSENRGTIYLSGVSETFKEHLLQHCSIFLGLEAMILPKDLKSGKQKGYCFLRFKTFGSAQRALNILTGKDWKLRGRHALTPRHLHAWLRGLARESRLPGVRVIPPPSEQEAWQMLNVDHPKIAAWHWGRKIEKLYHNLCPGTLCLILLPGTKSTHGSLSGLGLMGIKDEEESTIPQTCVCESAHHLPGVIS</sequence>
<reference key="1">
    <citation type="submission" date="2005-12" db="EMBL/GenBank/DDBJ databases">
        <authorList>
            <consortium name="NIH - Mammalian Gene Collection (MGC) project"/>
        </authorList>
    </citation>
    <scope>NUCLEOTIDE SEQUENCE [LARGE SCALE MRNA]</scope>
    <source>
        <strain>Crossbred X Angus</strain>
        <tissue>Liver</tissue>
    </source>
</reference>
<evidence type="ECO:0000255" key="1">
    <source>
        <dbReference type="PROSITE-ProRule" id="PRU00176"/>
    </source>
</evidence>
<organism>
    <name type="scientific">Bos taurus</name>
    <name type="common">Bovine</name>
    <dbReference type="NCBI Taxonomy" id="9913"/>
    <lineage>
        <taxon>Eukaryota</taxon>
        <taxon>Metazoa</taxon>
        <taxon>Chordata</taxon>
        <taxon>Craniata</taxon>
        <taxon>Vertebrata</taxon>
        <taxon>Euteleostomi</taxon>
        <taxon>Mammalia</taxon>
        <taxon>Eutheria</taxon>
        <taxon>Laurasiatheria</taxon>
        <taxon>Artiodactyla</taxon>
        <taxon>Ruminantia</taxon>
        <taxon>Pecora</taxon>
        <taxon>Bovidae</taxon>
        <taxon>Bovinae</taxon>
        <taxon>Bos</taxon>
    </lineage>
</organism>
<keyword id="KW-0269">Exonuclease</keyword>
<keyword id="KW-0378">Hydrolase</keyword>
<keyword id="KW-0540">Nuclease</keyword>
<keyword id="KW-1185">Reference proteome</keyword>
<keyword id="KW-0677">Repeat</keyword>
<keyword id="KW-0694">RNA-binding</keyword>
<proteinExistence type="evidence at transcript level"/>
<protein>
    <recommendedName>
        <fullName>RNA exonuclease 5</fullName>
        <ecNumber>3.1.-.-</ecNumber>
    </recommendedName>
    <alternativeName>
        <fullName>Putative RNA exonuclease NEF-sp</fullName>
    </alternativeName>
</protein>
<feature type="chain" id="PRO_0000287344" description="RNA exonuclease 5">
    <location>
        <begin position="1"/>
        <end position="783"/>
    </location>
</feature>
<feature type="domain" description="Exonuclease">
    <location>
        <begin position="230"/>
        <end position="378"/>
    </location>
</feature>
<feature type="domain" description="RRM 1" evidence="1">
    <location>
        <begin position="503"/>
        <end position="577"/>
    </location>
</feature>
<feature type="domain" description="RRM 2" evidence="1">
    <location>
        <begin position="598"/>
        <end position="677"/>
    </location>
</feature>